<feature type="chain" id="PRO_0000321688" description="Rhomboid protease GlpG">
    <location>
        <begin position="1"/>
        <end position="276"/>
    </location>
</feature>
<feature type="transmembrane region" description="Helical" evidence="1">
    <location>
        <begin position="94"/>
        <end position="114"/>
    </location>
</feature>
<feature type="transmembrane region" description="Helical" evidence="1">
    <location>
        <begin position="142"/>
        <end position="162"/>
    </location>
</feature>
<feature type="transmembrane region" description="Helical" evidence="1">
    <location>
        <begin position="169"/>
        <end position="189"/>
    </location>
</feature>
<feature type="transmembrane region" description="Helical" evidence="1">
    <location>
        <begin position="192"/>
        <end position="212"/>
    </location>
</feature>
<feature type="transmembrane region" description="Helical" evidence="1">
    <location>
        <begin position="229"/>
        <end position="249"/>
    </location>
</feature>
<feature type="transmembrane region" description="Helical" evidence="1">
    <location>
        <begin position="250"/>
        <end position="270"/>
    </location>
</feature>
<feature type="active site" description="Nucleophile" evidence="1">
    <location>
        <position position="201"/>
    </location>
</feature>
<feature type="active site" evidence="1">
    <location>
        <position position="254"/>
    </location>
</feature>
<organism>
    <name type="scientific">Salmonella choleraesuis (strain SC-B67)</name>
    <dbReference type="NCBI Taxonomy" id="321314"/>
    <lineage>
        <taxon>Bacteria</taxon>
        <taxon>Pseudomonadati</taxon>
        <taxon>Pseudomonadota</taxon>
        <taxon>Gammaproteobacteria</taxon>
        <taxon>Enterobacterales</taxon>
        <taxon>Enterobacteriaceae</taxon>
        <taxon>Salmonella</taxon>
    </lineage>
</organism>
<evidence type="ECO:0000255" key="1">
    <source>
        <dbReference type="HAMAP-Rule" id="MF_01594"/>
    </source>
</evidence>
<gene>
    <name evidence="1" type="primary">glpG</name>
    <name type="ordered locus">SCH_3455</name>
</gene>
<keyword id="KW-0997">Cell inner membrane</keyword>
<keyword id="KW-1003">Cell membrane</keyword>
<keyword id="KW-0378">Hydrolase</keyword>
<keyword id="KW-0472">Membrane</keyword>
<keyword id="KW-0645">Protease</keyword>
<keyword id="KW-0720">Serine protease</keyword>
<keyword id="KW-0812">Transmembrane</keyword>
<keyword id="KW-1133">Transmembrane helix</keyword>
<name>GLPG_SALCH</name>
<sequence>MLMITSFANPRVAQAFVDYMATQGVILTIQQHNQSDIWLADESQAERVRVELARFIENPGDPRYLAASWQSGQTNSGLRYRRFPFLATLRERAGPVTWIVMIACVLVYIAMSLIGDQTVMVWLAWPFDPVLKFEVWRYFTHIFMHFSLMHILFNLLWWWYLGGAVEKRLGSGKLIVITVVSALLSGYVQQKFSGPWFGGLSGVVYALMGYVWLRGERDPQSGIYLQRGLIIFALLWIVAGWFDWFGMSMANGAHIAGLIVGLAMAFVDTLNARKRT</sequence>
<accession>Q57IV1</accession>
<comment type="function">
    <text evidence="1">Rhomboid-type serine protease that catalyzes intramembrane proteolysis.</text>
</comment>
<comment type="catalytic activity">
    <reaction evidence="1">
        <text>Cleaves type-1 transmembrane domains using a catalytic dyad composed of serine and histidine that are contributed by different transmembrane domains.</text>
        <dbReference type="EC" id="3.4.21.105"/>
    </reaction>
</comment>
<comment type="subcellular location">
    <subcellularLocation>
        <location evidence="1">Cell inner membrane</location>
        <topology evidence="1">Multi-pass membrane protein</topology>
    </subcellularLocation>
</comment>
<comment type="similarity">
    <text evidence="1">Belongs to the peptidase S54 family.</text>
</comment>
<reference key="1">
    <citation type="journal article" date="2005" name="Nucleic Acids Res.">
        <title>The genome sequence of Salmonella enterica serovar Choleraesuis, a highly invasive and resistant zoonotic pathogen.</title>
        <authorList>
            <person name="Chiu C.-H."/>
            <person name="Tang P."/>
            <person name="Chu C."/>
            <person name="Hu S."/>
            <person name="Bao Q."/>
            <person name="Yu J."/>
            <person name="Chou Y.-Y."/>
            <person name="Wang H.-S."/>
            <person name="Lee Y.-S."/>
        </authorList>
    </citation>
    <scope>NUCLEOTIDE SEQUENCE [LARGE SCALE GENOMIC DNA]</scope>
    <source>
        <strain>SC-B67</strain>
    </source>
</reference>
<dbReference type="EC" id="3.4.21.105" evidence="1"/>
<dbReference type="EMBL" id="AE017220">
    <property type="protein sequence ID" value="AAX67361.1"/>
    <property type="molecule type" value="Genomic_DNA"/>
</dbReference>
<dbReference type="RefSeq" id="WP_001541030.1">
    <property type="nucleotide sequence ID" value="NC_006905.1"/>
</dbReference>
<dbReference type="SMR" id="Q57IV1"/>
<dbReference type="KEGG" id="sec:SCH_3455"/>
<dbReference type="HOGENOM" id="CLU_058989_0_0_6"/>
<dbReference type="Proteomes" id="UP000000538">
    <property type="component" value="Chromosome"/>
</dbReference>
<dbReference type="GO" id="GO:0005886">
    <property type="term" value="C:plasma membrane"/>
    <property type="evidence" value="ECO:0007669"/>
    <property type="project" value="UniProtKB-SubCell"/>
</dbReference>
<dbReference type="GO" id="GO:0004252">
    <property type="term" value="F:serine-type endopeptidase activity"/>
    <property type="evidence" value="ECO:0007669"/>
    <property type="project" value="UniProtKB-UniRule"/>
</dbReference>
<dbReference type="GO" id="GO:0006508">
    <property type="term" value="P:proteolysis"/>
    <property type="evidence" value="ECO:0007669"/>
    <property type="project" value="UniProtKB-UniRule"/>
</dbReference>
<dbReference type="FunFam" id="1.20.1540.10:FF:000003">
    <property type="entry name" value="Rhomboid protease GlpG"/>
    <property type="match status" value="1"/>
</dbReference>
<dbReference type="FunFam" id="3.30.70.2350:FF:000001">
    <property type="entry name" value="Rhomboid protease GlpG"/>
    <property type="match status" value="1"/>
</dbReference>
<dbReference type="Gene3D" id="3.30.70.2350">
    <property type="match status" value="1"/>
</dbReference>
<dbReference type="Gene3D" id="1.20.1540.10">
    <property type="entry name" value="Rhomboid-like"/>
    <property type="match status" value="1"/>
</dbReference>
<dbReference type="HAMAP" id="MF_01594">
    <property type="entry name" value="Rhomboid_GlpG"/>
    <property type="match status" value="1"/>
</dbReference>
<dbReference type="InterPro" id="IPR038236">
    <property type="entry name" value="GlpG_N_sf"/>
</dbReference>
<dbReference type="InterPro" id="IPR022732">
    <property type="entry name" value="Peptidase_S54_GlpG_N"/>
</dbReference>
<dbReference type="InterPro" id="IPR022764">
    <property type="entry name" value="Peptidase_S54_rhomboid_dom"/>
</dbReference>
<dbReference type="InterPro" id="IPR035952">
    <property type="entry name" value="Rhomboid-like_sf"/>
</dbReference>
<dbReference type="InterPro" id="IPR023662">
    <property type="entry name" value="Rhomboid_protease_GlpG"/>
</dbReference>
<dbReference type="NCBIfam" id="NF008155">
    <property type="entry name" value="PRK10907.1"/>
    <property type="match status" value="1"/>
</dbReference>
<dbReference type="NCBIfam" id="TIGR04239">
    <property type="entry name" value="rhombo_GlpG"/>
    <property type="match status" value="1"/>
</dbReference>
<dbReference type="PANTHER" id="PTHR43066:SF26">
    <property type="entry name" value="RHOMBOID PROTEASE GLPG"/>
    <property type="match status" value="1"/>
</dbReference>
<dbReference type="PANTHER" id="PTHR43066">
    <property type="entry name" value="RHOMBOID-RELATED PROTEIN"/>
    <property type="match status" value="1"/>
</dbReference>
<dbReference type="Pfam" id="PF01694">
    <property type="entry name" value="Rhomboid"/>
    <property type="match status" value="1"/>
</dbReference>
<dbReference type="Pfam" id="PF12122">
    <property type="entry name" value="Rhomboid_N"/>
    <property type="match status" value="1"/>
</dbReference>
<dbReference type="SUPFAM" id="SSF144091">
    <property type="entry name" value="Rhomboid-like"/>
    <property type="match status" value="1"/>
</dbReference>
<proteinExistence type="inferred from homology"/>
<protein>
    <recommendedName>
        <fullName evidence="1">Rhomboid protease GlpG</fullName>
        <ecNumber evidence="1">3.4.21.105</ecNumber>
    </recommendedName>
    <alternativeName>
        <fullName evidence="1">Intramembrane serine protease</fullName>
    </alternativeName>
</protein>